<gene>
    <name evidence="1" type="primary">rpiA</name>
    <name type="ordered locus">SG2010</name>
</gene>
<reference key="1">
    <citation type="journal article" date="2006" name="Genome Res.">
        <title>Massive genome erosion and functional adaptations provide insights into the symbiotic lifestyle of Sodalis glossinidius in the tsetse host.</title>
        <authorList>
            <person name="Toh H."/>
            <person name="Weiss B.L."/>
            <person name="Perkin S.A.H."/>
            <person name="Yamashita A."/>
            <person name="Oshima K."/>
            <person name="Hattori M."/>
            <person name="Aksoy S."/>
        </authorList>
    </citation>
    <scope>NUCLEOTIDE SEQUENCE [LARGE SCALE GENOMIC DNA]</scope>
    <source>
        <strain>morsitans</strain>
    </source>
</reference>
<accession>Q2NRE0</accession>
<feature type="chain" id="PRO_1000017003" description="Ribose-5-phosphate isomerase A">
    <location>
        <begin position="1"/>
        <end position="218"/>
    </location>
</feature>
<feature type="active site" description="Proton acceptor" evidence="1">
    <location>
        <position position="103"/>
    </location>
</feature>
<feature type="binding site" evidence="1">
    <location>
        <begin position="28"/>
        <end position="31"/>
    </location>
    <ligand>
        <name>substrate</name>
    </ligand>
</feature>
<feature type="binding site" evidence="1">
    <location>
        <begin position="81"/>
        <end position="84"/>
    </location>
    <ligand>
        <name>substrate</name>
    </ligand>
</feature>
<feature type="binding site" evidence="1">
    <location>
        <begin position="94"/>
        <end position="97"/>
    </location>
    <ligand>
        <name>substrate</name>
    </ligand>
</feature>
<feature type="binding site" evidence="1">
    <location>
        <position position="121"/>
    </location>
    <ligand>
        <name>substrate</name>
    </ligand>
</feature>
<protein>
    <recommendedName>
        <fullName evidence="1">Ribose-5-phosphate isomerase A</fullName>
        <ecNumber evidence="1">5.3.1.6</ecNumber>
    </recommendedName>
    <alternativeName>
        <fullName evidence="1">Phosphoriboisomerase A</fullName>
        <shortName evidence="1">PRI</shortName>
    </alternativeName>
</protein>
<organism>
    <name type="scientific">Sodalis glossinidius (strain morsitans)</name>
    <dbReference type="NCBI Taxonomy" id="343509"/>
    <lineage>
        <taxon>Bacteria</taxon>
        <taxon>Pseudomonadati</taxon>
        <taxon>Pseudomonadota</taxon>
        <taxon>Gammaproteobacteria</taxon>
        <taxon>Enterobacterales</taxon>
        <taxon>Bruguierivoracaceae</taxon>
        <taxon>Sodalis</taxon>
    </lineage>
</organism>
<evidence type="ECO:0000255" key="1">
    <source>
        <dbReference type="HAMAP-Rule" id="MF_00170"/>
    </source>
</evidence>
<comment type="function">
    <text evidence="1">Catalyzes the reversible conversion of ribose-5-phosphate to ribulose 5-phosphate.</text>
</comment>
<comment type="catalytic activity">
    <reaction evidence="1">
        <text>aldehydo-D-ribose 5-phosphate = D-ribulose 5-phosphate</text>
        <dbReference type="Rhea" id="RHEA:14657"/>
        <dbReference type="ChEBI" id="CHEBI:58121"/>
        <dbReference type="ChEBI" id="CHEBI:58273"/>
        <dbReference type="EC" id="5.3.1.6"/>
    </reaction>
</comment>
<comment type="pathway">
    <text evidence="1">Carbohydrate degradation; pentose phosphate pathway; D-ribose 5-phosphate from D-ribulose 5-phosphate (non-oxidative stage): step 1/1.</text>
</comment>
<comment type="subunit">
    <text evidence="1">Homodimer.</text>
</comment>
<comment type="similarity">
    <text evidence="1">Belongs to the ribose 5-phosphate isomerase family.</text>
</comment>
<keyword id="KW-0413">Isomerase</keyword>
<sequence>MTQDELKKAVGWAALKYVRLGTIVGVGTGSTAAHFIDALASVRHQIDGAVSSSEASSAKLQSLGIPLFDLNEVDSLDIYVDGADEINGSMQMIKGGGAALTREKIIAAVARKFICIADSSKLVDVLGTFPLPVEVIPMARAWVARELVRLGGAPVYRQGVVTDNGNIILDVHNLAIMDAVALEEQINNIPGVVTVGLFARRGADVALIGSEQGVKIIG</sequence>
<proteinExistence type="inferred from homology"/>
<dbReference type="EC" id="5.3.1.6" evidence="1"/>
<dbReference type="EMBL" id="AP008232">
    <property type="protein sequence ID" value="BAE75285.1"/>
    <property type="molecule type" value="Genomic_DNA"/>
</dbReference>
<dbReference type="RefSeq" id="WP_011411740.1">
    <property type="nucleotide sequence ID" value="NC_007712.1"/>
</dbReference>
<dbReference type="SMR" id="Q2NRE0"/>
<dbReference type="STRING" id="343509.SG2010"/>
<dbReference type="KEGG" id="sgl:SG2010"/>
<dbReference type="eggNOG" id="COG0120">
    <property type="taxonomic scope" value="Bacteria"/>
</dbReference>
<dbReference type="HOGENOM" id="CLU_056590_1_1_6"/>
<dbReference type="OrthoDB" id="5870696at2"/>
<dbReference type="UniPathway" id="UPA00115">
    <property type="reaction ID" value="UER00412"/>
</dbReference>
<dbReference type="Proteomes" id="UP000001932">
    <property type="component" value="Chromosome"/>
</dbReference>
<dbReference type="GO" id="GO:0005829">
    <property type="term" value="C:cytosol"/>
    <property type="evidence" value="ECO:0007669"/>
    <property type="project" value="TreeGrafter"/>
</dbReference>
<dbReference type="GO" id="GO:0004751">
    <property type="term" value="F:ribose-5-phosphate isomerase activity"/>
    <property type="evidence" value="ECO:0007669"/>
    <property type="project" value="UniProtKB-UniRule"/>
</dbReference>
<dbReference type="GO" id="GO:0006014">
    <property type="term" value="P:D-ribose metabolic process"/>
    <property type="evidence" value="ECO:0007669"/>
    <property type="project" value="TreeGrafter"/>
</dbReference>
<dbReference type="GO" id="GO:0009052">
    <property type="term" value="P:pentose-phosphate shunt, non-oxidative branch"/>
    <property type="evidence" value="ECO:0007669"/>
    <property type="project" value="UniProtKB-UniRule"/>
</dbReference>
<dbReference type="CDD" id="cd01398">
    <property type="entry name" value="RPI_A"/>
    <property type="match status" value="1"/>
</dbReference>
<dbReference type="FunFam" id="3.30.70.260:FF:000004">
    <property type="entry name" value="Ribose-5-phosphate isomerase A"/>
    <property type="match status" value="1"/>
</dbReference>
<dbReference type="FunFam" id="3.40.50.1360:FF:000001">
    <property type="entry name" value="Ribose-5-phosphate isomerase A"/>
    <property type="match status" value="1"/>
</dbReference>
<dbReference type="Gene3D" id="3.30.70.260">
    <property type="match status" value="1"/>
</dbReference>
<dbReference type="Gene3D" id="3.40.50.1360">
    <property type="match status" value="1"/>
</dbReference>
<dbReference type="HAMAP" id="MF_00170">
    <property type="entry name" value="Rib_5P_isom_A"/>
    <property type="match status" value="1"/>
</dbReference>
<dbReference type="InterPro" id="IPR037171">
    <property type="entry name" value="NagB/RpiA_transferase-like"/>
</dbReference>
<dbReference type="InterPro" id="IPR020672">
    <property type="entry name" value="Ribose5P_isomerase_typA_subgr"/>
</dbReference>
<dbReference type="InterPro" id="IPR004788">
    <property type="entry name" value="Ribose5P_isomerase_type_A"/>
</dbReference>
<dbReference type="NCBIfam" id="NF001924">
    <property type="entry name" value="PRK00702.1"/>
    <property type="match status" value="1"/>
</dbReference>
<dbReference type="NCBIfam" id="TIGR00021">
    <property type="entry name" value="rpiA"/>
    <property type="match status" value="1"/>
</dbReference>
<dbReference type="PANTHER" id="PTHR11934">
    <property type="entry name" value="RIBOSE-5-PHOSPHATE ISOMERASE"/>
    <property type="match status" value="1"/>
</dbReference>
<dbReference type="PANTHER" id="PTHR11934:SF0">
    <property type="entry name" value="RIBOSE-5-PHOSPHATE ISOMERASE"/>
    <property type="match status" value="1"/>
</dbReference>
<dbReference type="Pfam" id="PF06026">
    <property type="entry name" value="Rib_5-P_isom_A"/>
    <property type="match status" value="1"/>
</dbReference>
<dbReference type="SUPFAM" id="SSF75445">
    <property type="entry name" value="D-ribose-5-phosphate isomerase (RpiA), lid domain"/>
    <property type="match status" value="1"/>
</dbReference>
<dbReference type="SUPFAM" id="SSF100950">
    <property type="entry name" value="NagB/RpiA/CoA transferase-like"/>
    <property type="match status" value="1"/>
</dbReference>
<name>RPIA_SODGM</name>